<accession>B8E724</accession>
<keyword id="KW-0028">Amino-acid biosynthesis</keyword>
<keyword id="KW-0963">Cytoplasm</keyword>
<keyword id="KW-0220">Diaminopimelate biosynthesis</keyword>
<keyword id="KW-0456">Lyase</keyword>
<keyword id="KW-0457">Lysine biosynthesis</keyword>
<keyword id="KW-0704">Schiff base</keyword>
<comment type="function">
    <text evidence="1">Catalyzes the condensation of (S)-aspartate-beta-semialdehyde [(S)-ASA] and pyruvate to 4-hydroxy-tetrahydrodipicolinate (HTPA).</text>
</comment>
<comment type="catalytic activity">
    <reaction evidence="1">
        <text>L-aspartate 4-semialdehyde + pyruvate = (2S,4S)-4-hydroxy-2,3,4,5-tetrahydrodipicolinate + H2O + H(+)</text>
        <dbReference type="Rhea" id="RHEA:34171"/>
        <dbReference type="ChEBI" id="CHEBI:15361"/>
        <dbReference type="ChEBI" id="CHEBI:15377"/>
        <dbReference type="ChEBI" id="CHEBI:15378"/>
        <dbReference type="ChEBI" id="CHEBI:67139"/>
        <dbReference type="ChEBI" id="CHEBI:537519"/>
        <dbReference type="EC" id="4.3.3.7"/>
    </reaction>
</comment>
<comment type="pathway">
    <text evidence="1">Amino-acid biosynthesis; L-lysine biosynthesis via DAP pathway; (S)-tetrahydrodipicolinate from L-aspartate: step 3/4.</text>
</comment>
<comment type="subunit">
    <text evidence="1">Homotetramer; dimer of dimers.</text>
</comment>
<comment type="subcellular location">
    <subcellularLocation>
        <location evidence="1">Cytoplasm</location>
    </subcellularLocation>
</comment>
<comment type="similarity">
    <text evidence="1">Belongs to the DapA family.</text>
</comment>
<comment type="caution">
    <text evidence="2">Was originally thought to be a dihydrodipicolinate synthase (DHDPS), catalyzing the condensation of (S)-aspartate-beta-semialdehyde [(S)-ASA] and pyruvate to dihydrodipicolinate (DHDP). However, it was shown in E.coli that the product of the enzymatic reaction is not dihydrodipicolinate but in fact (4S)-4-hydroxy-2,3,4,5-tetrahydro-(2S)-dipicolinic acid (HTPA), and that the consecutive dehydration reaction leading to DHDP is not spontaneous but catalyzed by DapB.</text>
</comment>
<proteinExistence type="inferred from homology"/>
<feature type="chain" id="PRO_1000134876" description="4-hydroxy-tetrahydrodipicolinate synthase">
    <location>
        <begin position="1"/>
        <end position="294"/>
    </location>
</feature>
<feature type="active site" description="Proton donor/acceptor" evidence="1">
    <location>
        <position position="133"/>
    </location>
</feature>
<feature type="active site" description="Schiff-base intermediate with substrate" evidence="1">
    <location>
        <position position="161"/>
    </location>
</feature>
<feature type="binding site" evidence="1">
    <location>
        <position position="45"/>
    </location>
    <ligand>
        <name>pyruvate</name>
        <dbReference type="ChEBI" id="CHEBI:15361"/>
    </ligand>
</feature>
<feature type="binding site" evidence="1">
    <location>
        <position position="203"/>
    </location>
    <ligand>
        <name>pyruvate</name>
        <dbReference type="ChEBI" id="CHEBI:15361"/>
    </ligand>
</feature>
<feature type="site" description="Part of a proton relay during catalysis" evidence="1">
    <location>
        <position position="44"/>
    </location>
</feature>
<feature type="site" description="Part of a proton relay during catalysis" evidence="1">
    <location>
        <position position="107"/>
    </location>
</feature>
<evidence type="ECO:0000255" key="1">
    <source>
        <dbReference type="HAMAP-Rule" id="MF_00418"/>
    </source>
</evidence>
<evidence type="ECO:0000305" key="2"/>
<name>DAPA_SHEB2</name>
<protein>
    <recommendedName>
        <fullName evidence="1">4-hydroxy-tetrahydrodipicolinate synthase</fullName>
        <shortName evidence="1">HTPA synthase</shortName>
        <ecNumber evidence="1">4.3.3.7</ecNumber>
    </recommendedName>
</protein>
<sequence length="294" mass="31001">MINGSIVALITPMNSDGSVDFASLERLVEFHIDQGTDAIVAVGTTGESATLPMSEHVTVVSQTVKFAAGRVPVIGGNGANATSEAVELTKSLSKVGVAAMLGVTPYYNKPTPKGLIAHYKAVAASTDIPQILYNVPGRTAVDMLPETVAELVSVSNIIGVKEATGDLSRVKRLRELCGDDFLLYSGDDATAREFLLLGGNGVISVANNIVPQAFKAMCDAALAGNAELALSIDTPLRGLYSTLFCEANPIPVKWAAHRMGLIECGHIRLPLTELSEQCHGLLIEAMTRAQIEVK</sequence>
<organism>
    <name type="scientific">Shewanella baltica (strain OS223)</name>
    <dbReference type="NCBI Taxonomy" id="407976"/>
    <lineage>
        <taxon>Bacteria</taxon>
        <taxon>Pseudomonadati</taxon>
        <taxon>Pseudomonadota</taxon>
        <taxon>Gammaproteobacteria</taxon>
        <taxon>Alteromonadales</taxon>
        <taxon>Shewanellaceae</taxon>
        <taxon>Shewanella</taxon>
    </lineage>
</organism>
<reference key="1">
    <citation type="submission" date="2008-12" db="EMBL/GenBank/DDBJ databases">
        <title>Complete sequence of chromosome of Shewanella baltica OS223.</title>
        <authorList>
            <consortium name="US DOE Joint Genome Institute"/>
            <person name="Lucas S."/>
            <person name="Copeland A."/>
            <person name="Lapidus A."/>
            <person name="Glavina del Rio T."/>
            <person name="Dalin E."/>
            <person name="Tice H."/>
            <person name="Bruce D."/>
            <person name="Goodwin L."/>
            <person name="Pitluck S."/>
            <person name="Chertkov O."/>
            <person name="Meincke L."/>
            <person name="Brettin T."/>
            <person name="Detter J.C."/>
            <person name="Han C."/>
            <person name="Kuske C.R."/>
            <person name="Larimer F."/>
            <person name="Land M."/>
            <person name="Hauser L."/>
            <person name="Kyrpides N."/>
            <person name="Ovchinnikova G."/>
            <person name="Brettar I."/>
            <person name="Rodrigues J."/>
            <person name="Konstantinidis K."/>
            <person name="Tiedje J."/>
        </authorList>
    </citation>
    <scope>NUCLEOTIDE SEQUENCE [LARGE SCALE GENOMIC DNA]</scope>
    <source>
        <strain>OS223</strain>
    </source>
</reference>
<dbReference type="EC" id="4.3.3.7" evidence="1"/>
<dbReference type="EMBL" id="CP001252">
    <property type="protein sequence ID" value="ACK46297.1"/>
    <property type="molecule type" value="Genomic_DNA"/>
</dbReference>
<dbReference type="RefSeq" id="WP_006082060.1">
    <property type="nucleotide sequence ID" value="NC_011663.1"/>
</dbReference>
<dbReference type="SMR" id="B8E724"/>
<dbReference type="GeneID" id="11772756"/>
<dbReference type="KEGG" id="sbp:Sbal223_1792"/>
<dbReference type="HOGENOM" id="CLU_049343_7_1_6"/>
<dbReference type="UniPathway" id="UPA00034">
    <property type="reaction ID" value="UER00017"/>
</dbReference>
<dbReference type="Proteomes" id="UP000002507">
    <property type="component" value="Chromosome"/>
</dbReference>
<dbReference type="GO" id="GO:0005829">
    <property type="term" value="C:cytosol"/>
    <property type="evidence" value="ECO:0007669"/>
    <property type="project" value="TreeGrafter"/>
</dbReference>
<dbReference type="GO" id="GO:0008840">
    <property type="term" value="F:4-hydroxy-tetrahydrodipicolinate synthase activity"/>
    <property type="evidence" value="ECO:0007669"/>
    <property type="project" value="UniProtKB-UniRule"/>
</dbReference>
<dbReference type="GO" id="GO:0019877">
    <property type="term" value="P:diaminopimelate biosynthetic process"/>
    <property type="evidence" value="ECO:0007669"/>
    <property type="project" value="UniProtKB-UniRule"/>
</dbReference>
<dbReference type="GO" id="GO:0009089">
    <property type="term" value="P:lysine biosynthetic process via diaminopimelate"/>
    <property type="evidence" value="ECO:0007669"/>
    <property type="project" value="UniProtKB-UniRule"/>
</dbReference>
<dbReference type="CDD" id="cd00950">
    <property type="entry name" value="DHDPS"/>
    <property type="match status" value="1"/>
</dbReference>
<dbReference type="Gene3D" id="3.20.20.70">
    <property type="entry name" value="Aldolase class I"/>
    <property type="match status" value="1"/>
</dbReference>
<dbReference type="HAMAP" id="MF_00418">
    <property type="entry name" value="DapA"/>
    <property type="match status" value="1"/>
</dbReference>
<dbReference type="InterPro" id="IPR013785">
    <property type="entry name" value="Aldolase_TIM"/>
</dbReference>
<dbReference type="InterPro" id="IPR005263">
    <property type="entry name" value="DapA"/>
</dbReference>
<dbReference type="InterPro" id="IPR002220">
    <property type="entry name" value="DapA-like"/>
</dbReference>
<dbReference type="InterPro" id="IPR020625">
    <property type="entry name" value="Schiff_base-form_aldolases_AS"/>
</dbReference>
<dbReference type="InterPro" id="IPR020624">
    <property type="entry name" value="Schiff_base-form_aldolases_CS"/>
</dbReference>
<dbReference type="NCBIfam" id="TIGR00674">
    <property type="entry name" value="dapA"/>
    <property type="match status" value="1"/>
</dbReference>
<dbReference type="PANTHER" id="PTHR12128:SF66">
    <property type="entry name" value="4-HYDROXY-2-OXOGLUTARATE ALDOLASE, MITOCHONDRIAL"/>
    <property type="match status" value="1"/>
</dbReference>
<dbReference type="PANTHER" id="PTHR12128">
    <property type="entry name" value="DIHYDRODIPICOLINATE SYNTHASE"/>
    <property type="match status" value="1"/>
</dbReference>
<dbReference type="Pfam" id="PF00701">
    <property type="entry name" value="DHDPS"/>
    <property type="match status" value="1"/>
</dbReference>
<dbReference type="PIRSF" id="PIRSF001365">
    <property type="entry name" value="DHDPS"/>
    <property type="match status" value="1"/>
</dbReference>
<dbReference type="PRINTS" id="PR00146">
    <property type="entry name" value="DHPICSNTHASE"/>
</dbReference>
<dbReference type="SMART" id="SM01130">
    <property type="entry name" value="DHDPS"/>
    <property type="match status" value="1"/>
</dbReference>
<dbReference type="SUPFAM" id="SSF51569">
    <property type="entry name" value="Aldolase"/>
    <property type="match status" value="1"/>
</dbReference>
<dbReference type="PROSITE" id="PS00665">
    <property type="entry name" value="DHDPS_1"/>
    <property type="match status" value="1"/>
</dbReference>
<dbReference type="PROSITE" id="PS00666">
    <property type="entry name" value="DHDPS_2"/>
    <property type="match status" value="1"/>
</dbReference>
<gene>
    <name evidence="1" type="primary">dapA</name>
    <name type="ordered locus">Sbal223_1792</name>
</gene>